<proteinExistence type="evidence at protein level"/>
<name>THIDN_METJA</name>
<accession>Q57688</accession>
<sequence length="417" mass="47056">MVILAIGGYDPTSGAGISADIKTAHTLGVYCPTITTSVIPQNNKMVYEKFDLPEENIKNQFKAVFEEFDIEYVKTGVLTKPAIDTLLKYIDKYDLKVICDPVLASTTKFSFVDEKLMEKYIELFNKSFLITPNKEEYKKIMEFIKNNNLMIRNDLYILATGIDDILMKNFKPIKTFKGFRVDKEVHGTGCVYSTAITAFLSKGYDLEEAIKEAKRFVLSSVIYAKKSKFGYNSNPTYINKEKVIKNLSYAIYLLKKMNFTLIPEVGSNIAESLPFPKDFKDVAALTGRIIKNKLGGFYIVGDIEFGASEHIAKIILSASKFNPEIRACMNIKYDGGLIKLLKDKFAVSSFDRKEEPPNVSTMEWGTKIACEKFGGVPDIIYDRGGEGKEPMIRVLGRDAIEVVKKVEVIQKIYNTLM</sequence>
<evidence type="ECO:0000250" key="1"/>
<evidence type="ECO:0000250" key="2">
    <source>
        <dbReference type="UniProtKB" id="P76422"/>
    </source>
</evidence>
<evidence type="ECO:0000250" key="3">
    <source>
        <dbReference type="UniProtKB" id="Q9WZP7"/>
    </source>
</evidence>
<evidence type="ECO:0000305" key="4"/>
<evidence type="ECO:0007829" key="5">
    <source>
        <dbReference type="PDB" id="2PHP"/>
    </source>
</evidence>
<comment type="function">
    <text evidence="2">Catalyzes the phosphorylation of hydroxymethylpyrimidine phosphate (HMP-P) to HMP-PP, and of HMP to HMP-P.</text>
</comment>
<comment type="function">
    <text evidence="3">Condenses 4-methyl-5-(beta-hydroxyethyl)thiazole monophosphate (THZ-P) and 4-amino-5-hydroxymethyl pyrimidine pyrophosphate (HMP-PP) to form thiamine monophosphate (TMP).</text>
</comment>
<comment type="catalytic activity">
    <reaction evidence="2">
        <text>4-amino-5-hydroxymethyl-2-methylpyrimidine + ATP = 4-amino-2-methyl-5-(phosphooxymethyl)pyrimidine + ADP + H(+)</text>
        <dbReference type="Rhea" id="RHEA:23096"/>
        <dbReference type="ChEBI" id="CHEBI:15378"/>
        <dbReference type="ChEBI" id="CHEBI:16892"/>
        <dbReference type="ChEBI" id="CHEBI:30616"/>
        <dbReference type="ChEBI" id="CHEBI:58354"/>
        <dbReference type="ChEBI" id="CHEBI:456216"/>
        <dbReference type="EC" id="2.7.1.49"/>
    </reaction>
</comment>
<comment type="catalytic activity">
    <reaction evidence="2">
        <text>4-amino-2-methyl-5-(phosphooxymethyl)pyrimidine + ATP = 4-amino-2-methyl-5-(diphosphooxymethyl)pyrimidine + ADP</text>
        <dbReference type="Rhea" id="RHEA:19893"/>
        <dbReference type="ChEBI" id="CHEBI:30616"/>
        <dbReference type="ChEBI" id="CHEBI:57841"/>
        <dbReference type="ChEBI" id="CHEBI:58354"/>
        <dbReference type="ChEBI" id="CHEBI:456216"/>
        <dbReference type="EC" id="2.7.4.7"/>
    </reaction>
</comment>
<comment type="catalytic activity">
    <reaction evidence="3">
        <text>2-[(2R,5Z)-2-carboxy-4-methylthiazol-5(2H)-ylidene]ethyl phosphate + 4-amino-2-methyl-5-(diphosphooxymethyl)pyrimidine + 2 H(+) = thiamine phosphate + CO2 + diphosphate</text>
        <dbReference type="Rhea" id="RHEA:47844"/>
        <dbReference type="ChEBI" id="CHEBI:15378"/>
        <dbReference type="ChEBI" id="CHEBI:16526"/>
        <dbReference type="ChEBI" id="CHEBI:33019"/>
        <dbReference type="ChEBI" id="CHEBI:37575"/>
        <dbReference type="ChEBI" id="CHEBI:57841"/>
        <dbReference type="ChEBI" id="CHEBI:62899"/>
        <dbReference type="EC" id="2.5.1.3"/>
    </reaction>
</comment>
<comment type="catalytic activity">
    <reaction evidence="3">
        <text>2-(2-carboxy-4-methylthiazol-5-yl)ethyl phosphate + 4-amino-2-methyl-5-(diphosphooxymethyl)pyrimidine + 2 H(+) = thiamine phosphate + CO2 + diphosphate</text>
        <dbReference type="Rhea" id="RHEA:47848"/>
        <dbReference type="ChEBI" id="CHEBI:15378"/>
        <dbReference type="ChEBI" id="CHEBI:16526"/>
        <dbReference type="ChEBI" id="CHEBI:33019"/>
        <dbReference type="ChEBI" id="CHEBI:37575"/>
        <dbReference type="ChEBI" id="CHEBI:57841"/>
        <dbReference type="ChEBI" id="CHEBI:62890"/>
        <dbReference type="EC" id="2.5.1.3"/>
    </reaction>
</comment>
<comment type="catalytic activity">
    <reaction evidence="3">
        <text>4-methyl-5-(2-phosphooxyethyl)-thiazole + 4-amino-2-methyl-5-(diphosphooxymethyl)pyrimidine + H(+) = thiamine phosphate + diphosphate</text>
        <dbReference type="Rhea" id="RHEA:22328"/>
        <dbReference type="ChEBI" id="CHEBI:15378"/>
        <dbReference type="ChEBI" id="CHEBI:33019"/>
        <dbReference type="ChEBI" id="CHEBI:37575"/>
        <dbReference type="ChEBI" id="CHEBI:57841"/>
        <dbReference type="ChEBI" id="CHEBI:58296"/>
        <dbReference type="EC" id="2.5.1.3"/>
    </reaction>
</comment>
<comment type="pathway">
    <text>Cofactor biosynthesis; thiamine diphosphate biosynthesis; 4-amino-2-methyl-5-diphosphomethylpyrimidine from 5-amino-1-(5-phospho-D-ribosyl)imidazole.</text>
</comment>
<comment type="pathway">
    <text>Cofactor biosynthesis; thiamine diphosphate biosynthesis; thiamine phosphate from 4-amino-2-methyl-5-diphosphomethylpyrimidine and 4-methyl-5-(2-phosphoethyl)-thiazole: step 1/1.</text>
</comment>
<comment type="similarity">
    <text evidence="4">In the N-terminal section; belongs to the ThiD family.</text>
</comment>
<comment type="similarity">
    <text evidence="4">In the C-terminal section; belongs to the ThiN family.</text>
</comment>
<comment type="sequence caution" evidence="4">
    <conflict type="erroneous initiation">
        <sequence resource="EMBL-CDS" id="AAB98222"/>
    </conflict>
    <text>Extended N-terminus.</text>
</comment>
<dbReference type="EC" id="2.7.1.49" evidence="2"/>
<dbReference type="EC" id="2.7.4.7" evidence="2"/>
<dbReference type="EC" id="2.5.1.3"/>
<dbReference type="EMBL" id="L77117">
    <property type="protein sequence ID" value="AAB98222.1"/>
    <property type="status" value="ALT_INIT"/>
    <property type="molecule type" value="Genomic_DNA"/>
</dbReference>
<dbReference type="PIR" id="E64329">
    <property type="entry name" value="E64329"/>
</dbReference>
<dbReference type="RefSeq" id="WP_064496432.1">
    <property type="nucleotide sequence ID" value="NC_000909.1"/>
</dbReference>
<dbReference type="PDB" id="2PHP">
    <property type="method" value="X-ray"/>
    <property type="resolution" value="2.03 A"/>
    <property type="chains" value="A/B/D/E=236-416"/>
</dbReference>
<dbReference type="PDBsum" id="2PHP"/>
<dbReference type="SMR" id="Q57688"/>
<dbReference type="FunCoup" id="Q57688">
    <property type="interactions" value="119"/>
</dbReference>
<dbReference type="STRING" id="243232.MJ_0236"/>
<dbReference type="PaxDb" id="243232-MJ_0236"/>
<dbReference type="EnsemblBacteria" id="AAB98222">
    <property type="protein sequence ID" value="AAB98222"/>
    <property type="gene ID" value="MJ_0236"/>
</dbReference>
<dbReference type="GeneID" id="1451089"/>
<dbReference type="KEGG" id="mja:MJ_0236"/>
<dbReference type="eggNOG" id="arCOG00020">
    <property type="taxonomic scope" value="Archaea"/>
</dbReference>
<dbReference type="HOGENOM" id="CLU_035788_0_0_2"/>
<dbReference type="InParanoid" id="Q57688"/>
<dbReference type="OrthoDB" id="43786at2157"/>
<dbReference type="UniPathway" id="UPA00060">
    <property type="reaction ID" value="UER00141"/>
</dbReference>
<dbReference type="EvolutionaryTrace" id="Q57688"/>
<dbReference type="Proteomes" id="UP000000805">
    <property type="component" value="Chromosome"/>
</dbReference>
<dbReference type="GO" id="GO:0005829">
    <property type="term" value="C:cytosol"/>
    <property type="evidence" value="ECO:0000318"/>
    <property type="project" value="GO_Central"/>
</dbReference>
<dbReference type="GO" id="GO:0005524">
    <property type="term" value="F:ATP binding"/>
    <property type="evidence" value="ECO:0007669"/>
    <property type="project" value="UniProtKB-KW"/>
</dbReference>
<dbReference type="GO" id="GO:0008902">
    <property type="term" value="F:hydroxymethylpyrimidine kinase activity"/>
    <property type="evidence" value="ECO:0000318"/>
    <property type="project" value="GO_Central"/>
</dbReference>
<dbReference type="GO" id="GO:0008972">
    <property type="term" value="F:phosphomethylpyrimidine kinase activity"/>
    <property type="evidence" value="ECO:0000318"/>
    <property type="project" value="GO_Central"/>
</dbReference>
<dbReference type="GO" id="GO:0004789">
    <property type="term" value="F:thiamine-phosphate diphosphorylase activity"/>
    <property type="evidence" value="ECO:0007669"/>
    <property type="project" value="UniProtKB-EC"/>
</dbReference>
<dbReference type="GO" id="GO:0009228">
    <property type="term" value="P:thiamine biosynthetic process"/>
    <property type="evidence" value="ECO:0000318"/>
    <property type="project" value="GO_Central"/>
</dbReference>
<dbReference type="GO" id="GO:0009229">
    <property type="term" value="P:thiamine diphosphate biosynthetic process"/>
    <property type="evidence" value="ECO:0007669"/>
    <property type="project" value="UniProtKB-UniPathway"/>
</dbReference>
<dbReference type="CDD" id="cd01169">
    <property type="entry name" value="HMPP_kinase"/>
    <property type="match status" value="1"/>
</dbReference>
<dbReference type="FunFam" id="3.40.225.10:FF:000015">
    <property type="entry name" value="Phosphomethylpyrimidine kinase (Hmp-phosphate kinase)"/>
    <property type="match status" value="1"/>
</dbReference>
<dbReference type="Gene3D" id="3.40.1190.20">
    <property type="match status" value="1"/>
</dbReference>
<dbReference type="Gene3D" id="3.40.225.10">
    <property type="entry name" value="Class II aldolase/adducin N-terminal domain"/>
    <property type="match status" value="1"/>
</dbReference>
<dbReference type="InterPro" id="IPR036409">
    <property type="entry name" value="Aldolase_II/adducin_N_sf"/>
</dbReference>
<dbReference type="InterPro" id="IPR004399">
    <property type="entry name" value="HMP/HMP-P_kinase_dom"/>
</dbReference>
<dbReference type="InterPro" id="IPR013749">
    <property type="entry name" value="PM/HMP-P_kinase-1"/>
</dbReference>
<dbReference type="InterPro" id="IPR029056">
    <property type="entry name" value="Ribokinase-like"/>
</dbReference>
<dbReference type="InterPro" id="IPR019293">
    <property type="entry name" value="ThiN"/>
</dbReference>
<dbReference type="PANTHER" id="PTHR20858:SF17">
    <property type="entry name" value="HYDROXYMETHYLPYRIMIDINE_PHOSPHOMETHYLPYRIMIDINE KINASE THI20-RELATED"/>
    <property type="match status" value="1"/>
</dbReference>
<dbReference type="PANTHER" id="PTHR20858">
    <property type="entry name" value="PHOSPHOMETHYLPYRIMIDINE KINASE"/>
    <property type="match status" value="1"/>
</dbReference>
<dbReference type="Pfam" id="PF08543">
    <property type="entry name" value="Phos_pyr_kin"/>
    <property type="match status" value="1"/>
</dbReference>
<dbReference type="Pfam" id="PF10120">
    <property type="entry name" value="ThiN"/>
    <property type="match status" value="1"/>
</dbReference>
<dbReference type="SUPFAM" id="SSF53639">
    <property type="entry name" value="AraD/HMP-PK domain-like"/>
    <property type="match status" value="1"/>
</dbReference>
<dbReference type="SUPFAM" id="SSF53613">
    <property type="entry name" value="Ribokinase-like"/>
    <property type="match status" value="1"/>
</dbReference>
<reference key="1">
    <citation type="journal article" date="1996" name="Science">
        <title>Complete genome sequence of the methanogenic archaeon, Methanococcus jannaschii.</title>
        <authorList>
            <person name="Bult C.J."/>
            <person name="White O."/>
            <person name="Olsen G.J."/>
            <person name="Zhou L."/>
            <person name="Fleischmann R.D."/>
            <person name="Sutton G.G."/>
            <person name="Blake J.A."/>
            <person name="FitzGerald L.M."/>
            <person name="Clayton R.A."/>
            <person name="Gocayne J.D."/>
            <person name="Kerlavage A.R."/>
            <person name="Dougherty B.A."/>
            <person name="Tomb J.-F."/>
            <person name="Adams M.D."/>
            <person name="Reich C.I."/>
            <person name="Overbeek R."/>
            <person name="Kirkness E.F."/>
            <person name="Weinstock K.G."/>
            <person name="Merrick J.M."/>
            <person name="Glodek A."/>
            <person name="Scott J.L."/>
            <person name="Geoghagen N.S.M."/>
            <person name="Weidman J.F."/>
            <person name="Fuhrmann J.L."/>
            <person name="Nguyen D."/>
            <person name="Utterback T.R."/>
            <person name="Kelley J.M."/>
            <person name="Peterson J.D."/>
            <person name="Sadow P.W."/>
            <person name="Hanna M.C."/>
            <person name="Cotton M.D."/>
            <person name="Roberts K.M."/>
            <person name="Hurst M.A."/>
            <person name="Kaine B.P."/>
            <person name="Borodovsky M."/>
            <person name="Klenk H.-P."/>
            <person name="Fraser C.M."/>
            <person name="Smith H.O."/>
            <person name="Woese C.R."/>
            <person name="Venter J.C."/>
        </authorList>
    </citation>
    <scope>NUCLEOTIDE SEQUENCE [LARGE SCALE GENOMIC DNA]</scope>
    <source>
        <strain>ATCC 43067 / DSM 2661 / JAL-1 / JCM 10045 / NBRC 100440</strain>
    </source>
</reference>
<reference key="2">
    <citation type="submission" date="2009-02" db="PDB data bank">
        <title>Crystal structure of the C-terminal domain of protein MJ0236 (Y236_METJA).</title>
        <authorList>
            <consortium name="New York structural genomix research consortium (NYSGXRC)"/>
        </authorList>
    </citation>
    <scope>X-RAY CRYSTALLOGRAPHY (2.03 ANGSTROMS) OF 236-416</scope>
</reference>
<protein>
    <recommendedName>
        <fullName>Bifunctional thiamine biosynthesis protein ThiDN</fullName>
    </recommendedName>
    <domain>
        <recommendedName>
            <fullName>Hydroxymethylpyrimidine/phosphomethylpyrimidine kinase</fullName>
            <ecNumber evidence="2">2.7.1.49</ecNumber>
            <ecNumber evidence="2">2.7.4.7</ecNumber>
        </recommendedName>
        <alternativeName>
            <fullName>Hydroxymethylpyrimidine kinase</fullName>
            <shortName>HMP kinase</shortName>
        </alternativeName>
        <alternativeName>
            <fullName>Hydroxymethylpyrimidine phosphate kinase</fullName>
            <shortName>HMP-P kinase</shortName>
            <shortName>HMP-phosphate kinase</shortName>
            <shortName>HMPP kinase</shortName>
        </alternativeName>
    </domain>
    <domain>
        <recommendedName>
            <fullName>Thiamine-phosphate synthase ThiN</fullName>
            <shortName>TP synthase</shortName>
            <shortName>TPS</shortName>
            <ecNumber>2.5.1.3</ecNumber>
        </recommendedName>
        <alternativeName>
            <fullName>Thiamine-phosphate pyrophosphorylase</fullName>
            <shortName>TMP pyrophosphorylase</shortName>
            <shortName>TMP-PPase</shortName>
        </alternativeName>
    </domain>
</protein>
<gene>
    <name type="primary">thiDN</name>
    <name type="ordered locus">MJ0236</name>
</gene>
<organism>
    <name type="scientific">Methanocaldococcus jannaschii (strain ATCC 43067 / DSM 2661 / JAL-1 / JCM 10045 / NBRC 100440)</name>
    <name type="common">Methanococcus jannaschii</name>
    <dbReference type="NCBI Taxonomy" id="243232"/>
    <lineage>
        <taxon>Archaea</taxon>
        <taxon>Methanobacteriati</taxon>
        <taxon>Methanobacteriota</taxon>
        <taxon>Methanomada group</taxon>
        <taxon>Methanococci</taxon>
        <taxon>Methanococcales</taxon>
        <taxon>Methanocaldococcaceae</taxon>
        <taxon>Methanocaldococcus</taxon>
    </lineage>
</organism>
<feature type="chain" id="PRO_0000106755" description="Bifunctional thiamine biosynthesis protein ThiDN">
    <location>
        <begin position="1"/>
        <end position="417"/>
    </location>
</feature>
<feature type="region of interest" description="Hydroxymethylpyrimidine/phosphomethylpyrimidine kinase">
    <location>
        <begin position="1"/>
        <end position="235"/>
    </location>
</feature>
<feature type="region of interest" description="Thiamine-phosphate synthase">
    <location>
        <begin position="236"/>
        <end position="417"/>
    </location>
</feature>
<feature type="binding site" evidence="1">
    <location>
        <position position="41"/>
    </location>
    <ligand>
        <name>4-amino-5-hydroxymethyl-2-methylpyrimidine</name>
        <dbReference type="ChEBI" id="CHEBI:16892"/>
    </ligand>
</feature>
<feature type="helix" evidence="5">
    <location>
        <begin position="240"/>
        <end position="255"/>
    </location>
</feature>
<feature type="strand" evidence="5">
    <location>
        <begin position="269"/>
        <end position="272"/>
    </location>
</feature>
<feature type="helix" evidence="5">
    <location>
        <begin position="279"/>
        <end position="281"/>
    </location>
</feature>
<feature type="strand" evidence="5">
    <location>
        <begin position="282"/>
        <end position="287"/>
    </location>
</feature>
<feature type="strand" evidence="5">
    <location>
        <begin position="289"/>
        <end position="291"/>
    </location>
</feature>
<feature type="strand" evidence="5">
    <location>
        <begin position="295"/>
        <end position="299"/>
    </location>
</feature>
<feature type="strand" evidence="5">
    <location>
        <begin position="303"/>
        <end position="305"/>
    </location>
</feature>
<feature type="helix" evidence="5">
    <location>
        <begin position="309"/>
        <end position="319"/>
    </location>
</feature>
<feature type="strand" evidence="5">
    <location>
        <begin position="327"/>
        <end position="331"/>
    </location>
</feature>
<feature type="helix" evidence="5">
    <location>
        <begin position="335"/>
        <end position="341"/>
    </location>
</feature>
<feature type="turn" evidence="5">
    <location>
        <begin position="342"/>
        <end position="344"/>
    </location>
</feature>
<feature type="strand" evidence="5">
    <location>
        <begin position="347"/>
        <end position="349"/>
    </location>
</feature>
<feature type="helix" evidence="5">
    <location>
        <begin position="352"/>
        <end position="354"/>
    </location>
</feature>
<feature type="helix" evidence="5">
    <location>
        <begin position="361"/>
        <end position="373"/>
    </location>
</feature>
<feature type="strand" evidence="5">
    <location>
        <begin position="378"/>
        <end position="382"/>
    </location>
</feature>
<feature type="strand" evidence="5">
    <location>
        <begin position="391"/>
        <end position="398"/>
    </location>
</feature>
<feature type="helix" evidence="5">
    <location>
        <begin position="399"/>
        <end position="414"/>
    </location>
</feature>
<keyword id="KW-0002">3D-structure</keyword>
<keyword id="KW-0067">ATP-binding</keyword>
<keyword id="KW-0418">Kinase</keyword>
<keyword id="KW-0511">Multifunctional enzyme</keyword>
<keyword id="KW-0547">Nucleotide-binding</keyword>
<keyword id="KW-1185">Reference proteome</keyword>
<keyword id="KW-0784">Thiamine biosynthesis</keyword>
<keyword id="KW-0808">Transferase</keyword>